<name>ACCD_SYNSC</name>
<comment type="function">
    <text evidence="1">Component of the acetyl coenzyme A carboxylase (ACC) complex. Biotin carboxylase (BC) catalyzes the carboxylation of biotin on its carrier protein (BCCP) and then the CO(2) group is transferred by the transcarboxylase to acetyl-CoA to form malonyl-CoA.</text>
</comment>
<comment type="catalytic activity">
    <reaction evidence="1">
        <text>N(6)-carboxybiotinyl-L-lysyl-[protein] + acetyl-CoA = N(6)-biotinyl-L-lysyl-[protein] + malonyl-CoA</text>
        <dbReference type="Rhea" id="RHEA:54728"/>
        <dbReference type="Rhea" id="RHEA-COMP:10505"/>
        <dbReference type="Rhea" id="RHEA-COMP:10506"/>
        <dbReference type="ChEBI" id="CHEBI:57288"/>
        <dbReference type="ChEBI" id="CHEBI:57384"/>
        <dbReference type="ChEBI" id="CHEBI:83144"/>
        <dbReference type="ChEBI" id="CHEBI:83145"/>
        <dbReference type="EC" id="2.1.3.15"/>
    </reaction>
</comment>
<comment type="cofactor">
    <cofactor evidence="1">
        <name>Zn(2+)</name>
        <dbReference type="ChEBI" id="CHEBI:29105"/>
    </cofactor>
    <text evidence="1">Binds 1 zinc ion per subunit.</text>
</comment>
<comment type="pathway">
    <text evidence="1">Lipid metabolism; malonyl-CoA biosynthesis; malonyl-CoA from acetyl-CoA: step 1/1.</text>
</comment>
<comment type="subunit">
    <text evidence="1">Acetyl-CoA carboxylase is a heterohexamer composed of biotin carboxyl carrier protein (AccB), biotin carboxylase (AccC) and two subunits each of ACCase subunit alpha (AccA) and ACCase subunit beta (AccD).</text>
</comment>
<comment type="subcellular location">
    <subcellularLocation>
        <location evidence="1">Cytoplasm</location>
    </subcellularLocation>
</comment>
<comment type="similarity">
    <text evidence="1">Belongs to the AccD/PCCB family.</text>
</comment>
<dbReference type="EC" id="2.1.3.15" evidence="1"/>
<dbReference type="EMBL" id="CP000110">
    <property type="protein sequence ID" value="ABB35605.1"/>
    <property type="molecule type" value="Genomic_DNA"/>
</dbReference>
<dbReference type="RefSeq" id="WP_011364814.1">
    <property type="nucleotide sequence ID" value="NC_007516.1"/>
</dbReference>
<dbReference type="SMR" id="Q3AIH7"/>
<dbReference type="STRING" id="110662.Syncc9605_1860"/>
<dbReference type="KEGG" id="syd:Syncc9605_1860"/>
<dbReference type="eggNOG" id="COG0777">
    <property type="taxonomic scope" value="Bacteria"/>
</dbReference>
<dbReference type="HOGENOM" id="CLU_015486_1_1_3"/>
<dbReference type="OrthoDB" id="9772975at2"/>
<dbReference type="UniPathway" id="UPA00655">
    <property type="reaction ID" value="UER00711"/>
</dbReference>
<dbReference type="GO" id="GO:0009317">
    <property type="term" value="C:acetyl-CoA carboxylase complex"/>
    <property type="evidence" value="ECO:0007669"/>
    <property type="project" value="InterPro"/>
</dbReference>
<dbReference type="GO" id="GO:0003989">
    <property type="term" value="F:acetyl-CoA carboxylase activity"/>
    <property type="evidence" value="ECO:0007669"/>
    <property type="project" value="InterPro"/>
</dbReference>
<dbReference type="GO" id="GO:0005524">
    <property type="term" value="F:ATP binding"/>
    <property type="evidence" value="ECO:0007669"/>
    <property type="project" value="UniProtKB-KW"/>
</dbReference>
<dbReference type="GO" id="GO:0016743">
    <property type="term" value="F:carboxyl- or carbamoyltransferase activity"/>
    <property type="evidence" value="ECO:0007669"/>
    <property type="project" value="UniProtKB-UniRule"/>
</dbReference>
<dbReference type="GO" id="GO:0008270">
    <property type="term" value="F:zinc ion binding"/>
    <property type="evidence" value="ECO:0007669"/>
    <property type="project" value="UniProtKB-UniRule"/>
</dbReference>
<dbReference type="GO" id="GO:0006633">
    <property type="term" value="P:fatty acid biosynthetic process"/>
    <property type="evidence" value="ECO:0007669"/>
    <property type="project" value="UniProtKB-KW"/>
</dbReference>
<dbReference type="GO" id="GO:2001295">
    <property type="term" value="P:malonyl-CoA biosynthetic process"/>
    <property type="evidence" value="ECO:0007669"/>
    <property type="project" value="UniProtKB-UniRule"/>
</dbReference>
<dbReference type="Gene3D" id="3.90.226.10">
    <property type="entry name" value="2-enoyl-CoA Hydratase, Chain A, domain 1"/>
    <property type="match status" value="1"/>
</dbReference>
<dbReference type="HAMAP" id="MF_01395">
    <property type="entry name" value="AcetylCoA_CT_beta"/>
    <property type="match status" value="1"/>
</dbReference>
<dbReference type="InterPro" id="IPR034733">
    <property type="entry name" value="AcCoA_carboxyl_beta"/>
</dbReference>
<dbReference type="InterPro" id="IPR000438">
    <property type="entry name" value="Acetyl_CoA_COase_Trfase_b_su"/>
</dbReference>
<dbReference type="InterPro" id="IPR029045">
    <property type="entry name" value="ClpP/crotonase-like_dom_sf"/>
</dbReference>
<dbReference type="InterPro" id="IPR011762">
    <property type="entry name" value="COA_CT_N"/>
</dbReference>
<dbReference type="InterPro" id="IPR041010">
    <property type="entry name" value="Znf-ACC"/>
</dbReference>
<dbReference type="NCBIfam" id="TIGR00515">
    <property type="entry name" value="accD"/>
    <property type="match status" value="1"/>
</dbReference>
<dbReference type="PANTHER" id="PTHR42995">
    <property type="entry name" value="ACETYL-COENZYME A CARBOXYLASE CARBOXYL TRANSFERASE SUBUNIT BETA, CHLOROPLASTIC"/>
    <property type="match status" value="1"/>
</dbReference>
<dbReference type="PANTHER" id="PTHR42995:SF5">
    <property type="entry name" value="ACETYL-COENZYME A CARBOXYLASE CARBOXYL TRANSFERASE SUBUNIT BETA, CHLOROPLASTIC"/>
    <property type="match status" value="1"/>
</dbReference>
<dbReference type="Pfam" id="PF01039">
    <property type="entry name" value="Carboxyl_trans"/>
    <property type="match status" value="1"/>
</dbReference>
<dbReference type="Pfam" id="PF17848">
    <property type="entry name" value="Zn_ribbon_ACC"/>
    <property type="match status" value="1"/>
</dbReference>
<dbReference type="PRINTS" id="PR01070">
    <property type="entry name" value="ACCCTRFRASEB"/>
</dbReference>
<dbReference type="SUPFAM" id="SSF52096">
    <property type="entry name" value="ClpP/crotonase"/>
    <property type="match status" value="1"/>
</dbReference>
<dbReference type="PROSITE" id="PS50980">
    <property type="entry name" value="COA_CT_NTER"/>
    <property type="match status" value="1"/>
</dbReference>
<organism>
    <name type="scientific">Synechococcus sp. (strain CC9605)</name>
    <dbReference type="NCBI Taxonomy" id="110662"/>
    <lineage>
        <taxon>Bacteria</taxon>
        <taxon>Bacillati</taxon>
        <taxon>Cyanobacteriota</taxon>
        <taxon>Cyanophyceae</taxon>
        <taxon>Synechococcales</taxon>
        <taxon>Synechococcaceae</taxon>
        <taxon>Synechococcus</taxon>
    </lineage>
</organism>
<reference key="1">
    <citation type="submission" date="2005-07" db="EMBL/GenBank/DDBJ databases">
        <title>Complete sequence of Synechococcus sp. CC9605.</title>
        <authorList>
            <consortium name="US DOE Joint Genome Institute"/>
            <person name="Copeland A."/>
            <person name="Lucas S."/>
            <person name="Lapidus A."/>
            <person name="Barry K."/>
            <person name="Detter J.C."/>
            <person name="Glavina T."/>
            <person name="Hammon N."/>
            <person name="Israni S."/>
            <person name="Pitluck S."/>
            <person name="Schmutz J."/>
            <person name="Martinez M."/>
            <person name="Larimer F."/>
            <person name="Land M."/>
            <person name="Kyrpides N."/>
            <person name="Ivanova N."/>
            <person name="Richardson P."/>
        </authorList>
    </citation>
    <scope>NUCLEOTIDE SEQUENCE [LARGE SCALE GENOMIC DNA]</scope>
    <source>
        <strain>CC9605</strain>
    </source>
</reference>
<gene>
    <name evidence="1" type="primary">accD</name>
    <name type="ordered locus">Syncc9605_1860</name>
</gene>
<evidence type="ECO:0000255" key="1">
    <source>
        <dbReference type="HAMAP-Rule" id="MF_01395"/>
    </source>
</evidence>
<evidence type="ECO:0000255" key="2">
    <source>
        <dbReference type="PROSITE-ProRule" id="PRU01136"/>
    </source>
</evidence>
<protein>
    <recommendedName>
        <fullName evidence="1">Acetyl-coenzyme A carboxylase carboxyl transferase subunit beta</fullName>
        <shortName evidence="1">ACCase subunit beta</shortName>
        <shortName evidence="1">Acetyl-CoA carboxylase carboxyltransferase subunit beta</shortName>
        <ecNumber evidence="1">2.1.3.15</ecNumber>
    </recommendedName>
</protein>
<proteinExistence type="inferred from homology"/>
<accession>Q3AIH7</accession>
<feature type="chain" id="PRO_0000359075" description="Acetyl-coenzyme A carboxylase carboxyl transferase subunit beta">
    <location>
        <begin position="1"/>
        <end position="293"/>
    </location>
</feature>
<feature type="domain" description="CoA carboxyltransferase N-terminal" evidence="2">
    <location>
        <begin position="29"/>
        <end position="293"/>
    </location>
</feature>
<feature type="zinc finger region" description="C4-type" evidence="1">
    <location>
        <begin position="33"/>
        <end position="55"/>
    </location>
</feature>
<feature type="binding site" evidence="1">
    <location>
        <position position="33"/>
    </location>
    <ligand>
        <name>Zn(2+)</name>
        <dbReference type="ChEBI" id="CHEBI:29105"/>
    </ligand>
</feature>
<feature type="binding site" evidence="1">
    <location>
        <position position="36"/>
    </location>
    <ligand>
        <name>Zn(2+)</name>
        <dbReference type="ChEBI" id="CHEBI:29105"/>
    </ligand>
</feature>
<feature type="binding site" evidence="1">
    <location>
        <position position="52"/>
    </location>
    <ligand>
        <name>Zn(2+)</name>
        <dbReference type="ChEBI" id="CHEBI:29105"/>
    </ligand>
</feature>
<feature type="binding site" evidence="1">
    <location>
        <position position="55"/>
    </location>
    <ligand>
        <name>Zn(2+)</name>
        <dbReference type="ChEBI" id="CHEBI:29105"/>
    </ligand>
</feature>
<sequence length="293" mass="32173">MSLFDWFADRRKGQYVANVKQEPDEGDGLWSKCPECGQVVYLKDLKLNASVCANCGHHHRIDSAERIALIADPDSFQVLNADLAPVDPLGFKDRRAYADRLRESQASTGLRDGVVTGLCRVEGIPMGLAAMDFRFMGGSMGSVVGEKITRLIEDSTARKLPLLIVCASGGARMQEGMLSLMQMAKISGALERHREAELLYMPLLTHPTTGGVTASFAMLGDLILAEPKALIGFAGRRVIEQTLREKLPDNFQTAEYLQEHGFVDTIVPRTQLRSTLANLLRLHGCKPMELTSA</sequence>
<keyword id="KW-0067">ATP-binding</keyword>
<keyword id="KW-0963">Cytoplasm</keyword>
<keyword id="KW-0275">Fatty acid biosynthesis</keyword>
<keyword id="KW-0276">Fatty acid metabolism</keyword>
<keyword id="KW-0444">Lipid biosynthesis</keyword>
<keyword id="KW-0443">Lipid metabolism</keyword>
<keyword id="KW-0479">Metal-binding</keyword>
<keyword id="KW-0547">Nucleotide-binding</keyword>
<keyword id="KW-0808">Transferase</keyword>
<keyword id="KW-0862">Zinc</keyword>
<keyword id="KW-0863">Zinc-finger</keyword>